<protein>
    <recommendedName>
        <fullName>Uncharacterized protein MJECS05</fullName>
    </recommendedName>
</protein>
<reference key="1">
    <citation type="journal article" date="1996" name="Science">
        <title>Complete genome sequence of the methanogenic archaeon, Methanococcus jannaschii.</title>
        <authorList>
            <person name="Bult C.J."/>
            <person name="White O."/>
            <person name="Olsen G.J."/>
            <person name="Zhou L."/>
            <person name="Fleischmann R.D."/>
            <person name="Sutton G.G."/>
            <person name="Blake J.A."/>
            <person name="FitzGerald L.M."/>
            <person name="Clayton R.A."/>
            <person name="Gocayne J.D."/>
            <person name="Kerlavage A.R."/>
            <person name="Dougherty B.A."/>
            <person name="Tomb J.-F."/>
            <person name="Adams M.D."/>
            <person name="Reich C.I."/>
            <person name="Overbeek R."/>
            <person name="Kirkness E.F."/>
            <person name="Weinstock K.G."/>
            <person name="Merrick J.M."/>
            <person name="Glodek A."/>
            <person name="Scott J.L."/>
            <person name="Geoghagen N.S.M."/>
            <person name="Weidman J.F."/>
            <person name="Fuhrmann J.L."/>
            <person name="Nguyen D."/>
            <person name="Utterback T.R."/>
            <person name="Kelley J.M."/>
            <person name="Peterson J.D."/>
            <person name="Sadow P.W."/>
            <person name="Hanna M.C."/>
            <person name="Cotton M.D."/>
            <person name="Roberts K.M."/>
            <person name="Hurst M.A."/>
            <person name="Kaine B.P."/>
            <person name="Borodovsky M."/>
            <person name="Klenk H.-P."/>
            <person name="Fraser C.M."/>
            <person name="Smith H.O."/>
            <person name="Woese C.R."/>
            <person name="Venter J.C."/>
        </authorList>
    </citation>
    <scope>NUCLEOTIDE SEQUENCE [LARGE SCALE GENOMIC DNA]</scope>
    <source>
        <strain>ATCC 43067 / DSM 2661 / JAL-1 / JCM 10045 / NBRC 100440</strain>
    </source>
</reference>
<geneLocation type="plasmid">
    <name>small ECE</name>
</geneLocation>
<proteinExistence type="predicted"/>
<accession>Q60304</accession>
<feature type="chain" id="PRO_0000107486" description="Uncharacterized protein MJECS05">
    <location>
        <begin position="1"/>
        <end position="144"/>
    </location>
</feature>
<feature type="transmembrane region" description="Helical" evidence="1">
    <location>
        <begin position="16"/>
        <end position="36"/>
    </location>
</feature>
<feature type="transmembrane region" description="Helical" evidence="1">
    <location>
        <begin position="48"/>
        <end position="68"/>
    </location>
</feature>
<feature type="transmembrane region" description="Helical" evidence="1">
    <location>
        <begin position="87"/>
        <end position="107"/>
    </location>
</feature>
<feature type="transmembrane region" description="Helical" evidence="1">
    <location>
        <begin position="120"/>
        <end position="140"/>
    </location>
</feature>
<evidence type="ECO:0000255" key="1"/>
<evidence type="ECO:0000305" key="2"/>
<organism>
    <name type="scientific">Methanocaldococcus jannaschii (strain ATCC 43067 / DSM 2661 / JAL-1 / JCM 10045 / NBRC 100440)</name>
    <name type="common">Methanococcus jannaschii</name>
    <dbReference type="NCBI Taxonomy" id="243232"/>
    <lineage>
        <taxon>Archaea</taxon>
        <taxon>Methanobacteriati</taxon>
        <taxon>Methanobacteriota</taxon>
        <taxon>Methanomada group</taxon>
        <taxon>Methanococci</taxon>
        <taxon>Methanococcales</taxon>
        <taxon>Methanocaldococcaceae</taxon>
        <taxon>Methanocaldococcus</taxon>
    </lineage>
</organism>
<dbReference type="EMBL" id="L77119">
    <property type="protein sequence ID" value="AAC37063.1"/>
    <property type="molecule type" value="Genomic_DNA"/>
</dbReference>
<dbReference type="PIR" id="E64516">
    <property type="entry name" value="E64516"/>
</dbReference>
<dbReference type="SMR" id="Q60304"/>
<dbReference type="PaxDb" id="243232-MJ_ECS05"/>
<dbReference type="EnsemblBacteria" id="AAC37063">
    <property type="protein sequence ID" value="AAC37063"/>
    <property type="gene ID" value="MJ_ECS05"/>
</dbReference>
<dbReference type="KEGG" id="mja:MJ_ECS05"/>
<dbReference type="eggNOG" id="arCOG12721">
    <property type="taxonomic scope" value="Archaea"/>
</dbReference>
<dbReference type="HOGENOM" id="CLU_1792136_0_0_2"/>
<dbReference type="InParanoid" id="Q60304"/>
<dbReference type="Proteomes" id="UP000000805">
    <property type="component" value="Plasmid pDSM2661_2"/>
</dbReference>
<dbReference type="GO" id="GO:0005886">
    <property type="term" value="C:plasma membrane"/>
    <property type="evidence" value="ECO:0007669"/>
    <property type="project" value="UniProtKB-SubCell"/>
</dbReference>
<comment type="subcellular location">
    <subcellularLocation>
        <location evidence="2">Cell membrane</location>
        <topology evidence="2">Multi-pass membrane protein</topology>
    </subcellularLocation>
</comment>
<keyword id="KW-1003">Cell membrane</keyword>
<keyword id="KW-0472">Membrane</keyword>
<keyword id="KW-0614">Plasmid</keyword>
<keyword id="KW-1185">Reference proteome</keyword>
<keyword id="KW-0812">Transmembrane</keyword>
<keyword id="KW-1133">Transmembrane helix</keyword>
<gene>
    <name type="ordered locus">MJECS05</name>
</gene>
<sequence>MESKEYRKLEYNYKAFLIFSKVAMLTFLTVGIGAIFTPQTYPIMPTIGFIVVAGIVSLIGMTIGALIIHQQYETLPANEKLEFKQKLLPEAYYICIELFGYGSLVLLYNTFTSNNPTLCVMSLLMAGLFILVVLVIWYFGYKSY</sequence>
<name>Y3405_METJA</name>